<organismHost>
    <name type="scientific">Orgyia pseudotsugata</name>
    <name type="common">Douglas-fir tussock moth</name>
    <dbReference type="NCBI Taxonomy" id="33414"/>
</organismHost>
<sequence length="209" mass="23978">MAALVKPMLPLATFGGQQNGCLQHQLAKLVQARARRGYEHDIGQLAEKLKKRQVARGHLGDVLEQMGRQSELLPELVKNDEEFRIVQQRDLGHNTIEYLNLLQHDKLFSCRLCYTHAHWLWCEFHKTHAYRGPRDISVDAYVDHLNSDMGVVALVEEYYHWLSSCNDKAEAKRALKTLANVESLGDLLDSYNYSSVDADTSSYELMDFE</sequence>
<feature type="chain" id="PRO_0000132974" description="Uncharacterized 24.0 kDa protein">
    <location>
        <begin position="1"/>
        <end position="209"/>
    </location>
</feature>
<organism>
    <name type="scientific">Orgyia pseudotsugata multicapsid polyhedrosis virus</name>
    <name type="common">OpMNPV</name>
    <dbReference type="NCBI Taxonomy" id="262177"/>
    <lineage>
        <taxon>Viruses</taxon>
        <taxon>Viruses incertae sedis</taxon>
        <taxon>Naldaviricetes</taxon>
        <taxon>Lefavirales</taxon>
        <taxon>Baculoviridae</taxon>
        <taxon>Alphabaculovirus</taxon>
        <taxon>Alphabaculovirus orpseudotsugatae</taxon>
    </lineage>
</organism>
<name>Y034_NPVOP</name>
<keyword id="KW-1185">Reference proteome</keyword>
<gene>
    <name type="ORF">ORF26</name>
</gene>
<accession>Q05126</accession>
<proteinExistence type="predicted"/>
<dbReference type="EMBL" id="D13375">
    <property type="protein sequence ID" value="BAA02642.1"/>
    <property type="molecule type" value="Genomic_DNA"/>
</dbReference>
<dbReference type="EMBL" id="U75930">
    <property type="protein sequence ID" value="AAC59025.1"/>
    <property type="molecule type" value="Genomic_DNA"/>
</dbReference>
<dbReference type="PIR" id="JQ2031">
    <property type="entry name" value="JQ2031"/>
</dbReference>
<dbReference type="RefSeq" id="NP_046182.1">
    <property type="nucleotide sequence ID" value="NC_001875.2"/>
</dbReference>
<dbReference type="KEGG" id="vg:912111"/>
<dbReference type="OrthoDB" id="16007at10239"/>
<dbReference type="Proteomes" id="UP000009248">
    <property type="component" value="Genome"/>
</dbReference>
<dbReference type="InterPro" id="IPR009657">
    <property type="entry name" value="Protein_Ac34"/>
</dbReference>
<dbReference type="Pfam" id="PF06851">
    <property type="entry name" value="DUF1247"/>
    <property type="match status" value="1"/>
</dbReference>
<protein>
    <recommendedName>
        <fullName>Uncharacterized 24.0 kDa protein</fullName>
    </recommendedName>
    <alternativeName>
        <fullName>ORF26</fullName>
    </alternativeName>
</protein>
<reference key="1">
    <citation type="journal article" date="1993" name="J. Gen. Virol.">
        <title>Nucleotide sequence of the ubiquitin-39K gene region from the Orgyia pseudotsugata multinucleocapsid nuclear polyhedrosis virus genome.</title>
        <authorList>
            <person name="Russell R.L.Q."/>
            <person name="Rohrmann G.F."/>
        </authorList>
    </citation>
    <scope>NUCLEOTIDE SEQUENCE [GENOMIC DNA]</scope>
</reference>
<reference key="2">
    <citation type="journal article" date="1997" name="Virology">
        <title>The sequence of the Orgyia pseudotsugata multinucleocapsid nuclear polyhedrosis virus genome.</title>
        <authorList>
            <person name="Ahrens C.H."/>
            <person name="Russell R.R."/>
            <person name="Funk C.J."/>
            <person name="Evans J."/>
            <person name="Harwood S."/>
            <person name="Rohrmann G.F."/>
        </authorList>
    </citation>
    <scope>NUCLEOTIDE SEQUENCE [LARGE SCALE GENOMIC DNA]</scope>
</reference>